<protein>
    <recommendedName>
        <fullName>Cytochrome b-c1 complex subunit 9</fullName>
    </recommendedName>
    <alternativeName>
        <fullName>Complex III subunit 9</fullName>
    </alternativeName>
    <alternativeName>
        <fullName>Complex III subunit X</fullName>
    </alternativeName>
    <alternativeName>
        <fullName>Cytochrome c1 non-heme 7 kDa protein</fullName>
    </alternativeName>
    <alternativeName>
        <fullName>Ubiquinol-cytochrome c reductase complex 7.2 kDa protein</fullName>
    </alternativeName>
</protein>
<feature type="initiator methionine" description="Removed" evidence="4">
    <location>
        <position position="1"/>
    </location>
</feature>
<feature type="chain" id="PRO_0000193552" description="Cytochrome b-c1 complex subunit 9">
    <location>
        <begin position="2"/>
        <end position="64"/>
    </location>
</feature>
<feature type="topological domain" description="Mitochondrial matrix" evidence="5">
    <location>
        <begin position="2"/>
        <end position="21"/>
    </location>
</feature>
<feature type="transmembrane region" description="Helical" evidence="5">
    <location>
        <begin position="22"/>
        <end position="47"/>
    </location>
</feature>
<feature type="topological domain" description="Mitochondrial intermembrane" evidence="5">
    <location>
        <begin position="48"/>
        <end position="64"/>
    </location>
</feature>
<feature type="helix" evidence="7">
    <location>
        <begin position="6"/>
        <end position="13"/>
    </location>
</feature>
<feature type="turn" evidence="8">
    <location>
        <begin position="14"/>
        <end position="16"/>
    </location>
</feature>
<feature type="helix" evidence="7">
    <location>
        <begin position="18"/>
        <end position="47"/>
    </location>
</feature>
<feature type="turn" evidence="7">
    <location>
        <begin position="48"/>
        <end position="51"/>
    </location>
</feature>
<feature type="helix" evidence="7">
    <location>
        <begin position="53"/>
        <end position="56"/>
    </location>
</feature>
<feature type="helix" evidence="7">
    <location>
        <begin position="57"/>
        <end position="59"/>
    </location>
</feature>
<sequence>MVAPTLTARLYSLLFRRTSTFALTIVVGALFFERAFDQGADAIYEHINEGKLWKHIKHKYENKE</sequence>
<comment type="function">
    <text evidence="1">Component of the ubiquinol-cytochrome c oxidoreductase, a multisubunit transmembrane complex that is part of the mitochondrial electron transport chain which drives oxidative phosphorylation. The respiratory chain contains 3 multisubunit complexes succinate dehydrogenase (complex II, CII), ubiquinol-cytochrome c oxidoreductase (cytochrome b-c1 complex, complex III, CIII) and cytochrome c oxidase (complex IV, CIV), that cooperate to transfer electrons derived from NADH and succinate to molecular oxygen, creating an electrochemical gradient over the inner membrane that drives transmembrane transport and the ATP synthase. The cytochrome b-c1 complex catalyzes electron transfer from ubiquinol to cytochrome c, linking this redox reaction to translocation of protons across the mitochondrial inner membrane, with protons being carried across the membrane as hydrogens on the quinol. In the process called Q cycle, 2 protons are consumed from the matrix, 4 protons are released into the intermembrane space and 2 electrons are passed to cytochrome c.</text>
</comment>
<comment type="subunit">
    <text evidence="2 3 5">Component of the ubiquinol-cytochrome c oxidoreductase (cytochrome b-c1 complex, complex III, CIII), a multisubunit enzyme composed of 11 subunits (PubMed:9651245). The complex is composed of 3 respiratory subunits cytochrome b, cytochrome c1 and Rieske protein UQCRFS1, 2 core protein subunits UQCRC1/QCR1 and UQCRC2/QCR2, and 6 low-molecular weight protein subunits UQCRH/QCR6, UQCRB/QCR7, UQCRQ/QCR8, UQCR10/QCR9, UQCR11/QCR10 and subunit 9, the cleavage product of Rieske protein UQCRFS1 (PubMed:9651245). The complex exists as an obligatory dimer and forms supercomplexes (SCs) in the inner mitochondrial membrane with NADH-ubiquinone oxidoreductase (complex I, CI) and cytochrome c oxidase (complex IV, CIV), resulting in different assemblies (supercomplex SCI(1)III(2)IV(1) and megacomplex MCI(2)III(2)IV(2)) (PubMed:27830641). Interacts with STMP1 (By similarity).</text>
</comment>
<comment type="subcellular location">
    <subcellularLocation>
        <location evidence="1">Mitochondrion inner membrane</location>
        <topology evidence="1">Single-pass membrane protein</topology>
    </subcellularLocation>
</comment>
<comment type="similarity">
    <text evidence="6">Belongs to the UQCR10/QCR9 family.</text>
</comment>
<evidence type="ECO:0000250" key="1">
    <source>
        <dbReference type="UniProtKB" id="P22289"/>
    </source>
</evidence>
<evidence type="ECO:0000250" key="2">
    <source>
        <dbReference type="UniProtKB" id="Q8R1I1"/>
    </source>
</evidence>
<evidence type="ECO:0000269" key="3">
    <source>
    </source>
</evidence>
<evidence type="ECO:0000269" key="4">
    <source>
    </source>
</evidence>
<evidence type="ECO:0000269" key="5">
    <source>
    </source>
</evidence>
<evidence type="ECO:0000305" key="6"/>
<evidence type="ECO:0007829" key="7">
    <source>
        <dbReference type="PDB" id="1PP9"/>
    </source>
</evidence>
<evidence type="ECO:0007829" key="8">
    <source>
        <dbReference type="PDB" id="8P65"/>
    </source>
</evidence>
<organism>
    <name type="scientific">Bos taurus</name>
    <name type="common">Bovine</name>
    <dbReference type="NCBI Taxonomy" id="9913"/>
    <lineage>
        <taxon>Eukaryota</taxon>
        <taxon>Metazoa</taxon>
        <taxon>Chordata</taxon>
        <taxon>Craniata</taxon>
        <taxon>Vertebrata</taxon>
        <taxon>Euteleostomi</taxon>
        <taxon>Mammalia</taxon>
        <taxon>Eutheria</taxon>
        <taxon>Laurasiatheria</taxon>
        <taxon>Artiodactyla</taxon>
        <taxon>Ruminantia</taxon>
        <taxon>Pecora</taxon>
        <taxon>Bovidae</taxon>
        <taxon>Bovinae</taxon>
        <taxon>Bos</taxon>
    </lineage>
</organism>
<reference key="1">
    <citation type="submission" date="2005-08" db="EMBL/GenBank/DDBJ databases">
        <authorList>
            <consortium name="NIH - Mammalian Gene Collection (MGC) project"/>
        </authorList>
    </citation>
    <scope>NUCLEOTIDE SEQUENCE [LARGE SCALE MRNA]</scope>
    <source>
        <strain>Crossbred X Angus</strain>
        <tissue>Liver</tissue>
    </source>
</reference>
<reference key="2">
    <citation type="journal article" date="1983" name="Hoppe-Seyler's Z. Physiol. Chem.">
        <title>Amino-acid sequence of the smallest protein of the cytochrome c1 subcomplex from beef heart mitochondria.</title>
        <authorList>
            <person name="Schaegger H."/>
            <person name="von Jagow G."/>
            <person name="Borchart U."/>
            <person name="Machleidt W."/>
        </authorList>
    </citation>
    <scope>PROTEIN SEQUENCE OF 2-63</scope>
    <source>
        <tissue>Heart</tissue>
    </source>
</reference>
<reference key="3">
    <citation type="journal article" date="1997" name="Science">
        <title>Crystal structure of the cytochrome bc1 complex from bovine heart mitochondria.</title>
        <authorList>
            <person name="Xia D."/>
            <person name="Yu C.A."/>
            <person name="Kim H."/>
            <person name="Xia J.Z."/>
            <person name="Kachurin A.M."/>
            <person name="Zhang L."/>
            <person name="Yu L."/>
            <person name="Deisenhofer J."/>
        </authorList>
    </citation>
    <scope>X-RAY CRYSTALLOGRAPHY (2.7 ANGSTROMS)</scope>
</reference>
<reference key="4">
    <citation type="journal article" date="1997" name="Science">
        <authorList>
            <person name="Xia D."/>
            <person name="Yu C.A."/>
            <person name="Kim H."/>
            <person name="Xia J.Z."/>
            <person name="Kachurin A.M."/>
            <person name="Zhang L."/>
            <person name="Yu L."/>
            <person name="Deisenhofer J."/>
        </authorList>
    </citation>
    <scope>ERRATUM OF PUBMED:9204897</scope>
</reference>
<reference key="5">
    <citation type="journal article" date="1998" name="Science">
        <title>Complete structure of the 11-subunit bovine mitochondrial cytochrome bc1 complex.</title>
        <authorList>
            <person name="Iwata S."/>
            <person name="Lee J.W."/>
            <person name="Okada K."/>
            <person name="Lee J.K."/>
            <person name="Iwata M."/>
            <person name="Rasmussen B."/>
            <person name="Link T.A."/>
            <person name="Ramaswamy S."/>
            <person name="Jap B.K."/>
        </authorList>
    </citation>
    <scope>X-RAY CRYSTALLOGRAPHY (3.0 ANGSTROMS)</scope>
</reference>
<reference key="6">
    <citation type="journal article" date="2002" name="Biochemistry">
        <title>The crystal structure of mitochondrial cytochrome bc1 in complex with famoxadone: the role of aromatic-aromatic interaction in inhibition.</title>
        <authorList>
            <person name="Gao X."/>
            <person name="Wen X."/>
            <person name="Yu C."/>
            <person name="Esser L."/>
            <person name="Tsao S."/>
            <person name="Quinn B."/>
            <person name="Zhang L."/>
            <person name="Yu L."/>
            <person name="Xia D."/>
        </authorList>
    </citation>
    <scope>X-RAY CRYSTALLOGRAPHY (2.35 ANGSTROMS)</scope>
</reference>
<reference key="7">
    <citation type="journal article" date="2004" name="J. Mol. Biol.">
        <title>Crystallographic studies of quinol oxidation site inhibitors: a modified classification of inhibitors for the cytochrome bc(1) complex.</title>
        <authorList>
            <person name="Esser L."/>
            <person name="Quinn B."/>
            <person name="Li Y.F."/>
            <person name="Zhang M."/>
            <person name="Elberry M."/>
            <person name="Yu L."/>
            <person name="Yu C.A."/>
            <person name="Xia D."/>
        </authorList>
    </citation>
    <scope>X-RAY CRYSTALLOGRAPHY (2.69 ANGSTROMS)</scope>
</reference>
<reference key="8">
    <citation type="journal article" date="2005" name="J. Mol. Biol.">
        <title>Binding of the respiratory chain inhibitor antimycin to the mitochondrial bc1 complex: a new crystal structure reveals an altered intramolecular hydrogen-bonding pattern.</title>
        <authorList>
            <person name="Huang L.S."/>
            <person name="Cobessi D."/>
            <person name="Tung E.Y."/>
            <person name="Berry E.A."/>
        </authorList>
    </citation>
    <scope>X-RAY CRYSTALLOGRAPHY (2.1 ANGSTROMS)</scope>
</reference>
<reference key="9">
    <citation type="journal article" date="2006" name="Proc. Natl. Acad. Sci. U.S.A.">
        <title>Surface-modulated motion switch: capture and release of iron-sulfur protein in the cytochrome bc1 complex.</title>
        <authorList>
            <person name="Esser L."/>
            <person name="Gong X."/>
            <person name="Yang S."/>
            <person name="Yu L."/>
            <person name="Yu C.A."/>
            <person name="Xia D."/>
        </authorList>
    </citation>
    <scope>X-RAY CRYSTALLOGRAPHY (2.26 ANGSTROMS)</scope>
</reference>
<reference key="10">
    <citation type="journal article" date="2016" name="Elife">
        <title>Functional asymmetry and electron flow in the bovine respirasome.</title>
        <authorList>
            <person name="Sousa J.S."/>
            <person name="Mills D.J."/>
            <person name="Vonck J."/>
            <person name="Kuehlbrandt W."/>
        </authorList>
    </citation>
    <scope>STRUCTURE BY ELECTRON MICROSCOPY (9.10 ANGSTROMS)</scope>
    <scope>SUBUNIT</scope>
</reference>
<dbReference type="EMBL" id="BC102720">
    <property type="protein sequence ID" value="AAI02721.1"/>
    <property type="molecule type" value="mRNA"/>
</dbReference>
<dbReference type="PIR" id="A00123">
    <property type="entry name" value="CCBO17"/>
</dbReference>
<dbReference type="RefSeq" id="NP_001107195.1">
    <property type="nucleotide sequence ID" value="NM_001113723.2"/>
</dbReference>
<dbReference type="PDB" id="1BCC">
    <property type="method" value="X-ray"/>
    <property type="resolution" value="3.16 A"/>
    <property type="chains" value="J=2-63"/>
</dbReference>
<dbReference type="PDB" id="1BE3">
    <property type="method" value="X-ray"/>
    <property type="resolution" value="3.00 A"/>
    <property type="chains" value="J=2-63"/>
</dbReference>
<dbReference type="PDB" id="1BGY">
    <property type="method" value="X-ray"/>
    <property type="resolution" value="3.00 A"/>
    <property type="chains" value="J/V=2-63"/>
</dbReference>
<dbReference type="PDB" id="1L0L">
    <property type="method" value="X-ray"/>
    <property type="resolution" value="2.35 A"/>
    <property type="chains" value="J=2-63"/>
</dbReference>
<dbReference type="PDB" id="1L0N">
    <property type="method" value="X-ray"/>
    <property type="resolution" value="2.60 A"/>
    <property type="chains" value="J=2-63"/>
</dbReference>
<dbReference type="PDB" id="1NTK">
    <property type="method" value="X-ray"/>
    <property type="resolution" value="2.60 A"/>
    <property type="chains" value="J=2-63"/>
</dbReference>
<dbReference type="PDB" id="1NTM">
    <property type="method" value="X-ray"/>
    <property type="resolution" value="2.40 A"/>
    <property type="chains" value="J=2-63"/>
</dbReference>
<dbReference type="PDB" id="1NTZ">
    <property type="method" value="X-ray"/>
    <property type="resolution" value="2.60 A"/>
    <property type="chains" value="J=2-63"/>
</dbReference>
<dbReference type="PDB" id="1NU1">
    <property type="method" value="X-ray"/>
    <property type="resolution" value="3.20 A"/>
    <property type="chains" value="J=2-63"/>
</dbReference>
<dbReference type="PDB" id="1PP9">
    <property type="method" value="X-ray"/>
    <property type="resolution" value="2.10 A"/>
    <property type="chains" value="J/W=2-63"/>
</dbReference>
<dbReference type="PDB" id="1PPJ">
    <property type="method" value="X-ray"/>
    <property type="resolution" value="2.10 A"/>
    <property type="chains" value="J/W=2-63"/>
</dbReference>
<dbReference type="PDB" id="1QCR">
    <property type="method" value="X-ray"/>
    <property type="resolution" value="2.70 A"/>
    <property type="chains" value="J=5-63"/>
</dbReference>
<dbReference type="PDB" id="1SQB">
    <property type="method" value="X-ray"/>
    <property type="resolution" value="2.69 A"/>
    <property type="chains" value="J=2-63"/>
</dbReference>
<dbReference type="PDB" id="1SQP">
    <property type="method" value="X-ray"/>
    <property type="resolution" value="2.70 A"/>
    <property type="chains" value="J=2-63"/>
</dbReference>
<dbReference type="PDB" id="1SQQ">
    <property type="method" value="X-ray"/>
    <property type="resolution" value="3.00 A"/>
    <property type="chains" value="J=2-63"/>
</dbReference>
<dbReference type="PDB" id="1SQV">
    <property type="method" value="X-ray"/>
    <property type="resolution" value="2.85 A"/>
    <property type="chains" value="J=2-63"/>
</dbReference>
<dbReference type="PDB" id="1SQX">
    <property type="method" value="X-ray"/>
    <property type="resolution" value="2.60 A"/>
    <property type="chains" value="J=2-63"/>
</dbReference>
<dbReference type="PDB" id="2A06">
    <property type="method" value="X-ray"/>
    <property type="resolution" value="2.10 A"/>
    <property type="chains" value="J/W=2-63"/>
</dbReference>
<dbReference type="PDB" id="2BCC">
    <property type="method" value="X-ray"/>
    <property type="resolution" value="3.50 A"/>
    <property type="chains" value="J=2-63"/>
</dbReference>
<dbReference type="PDB" id="2FYU">
    <property type="method" value="X-ray"/>
    <property type="resolution" value="2.26 A"/>
    <property type="chains" value="J=2-63"/>
</dbReference>
<dbReference type="PDB" id="2YBB">
    <property type="method" value="EM"/>
    <property type="resolution" value="19.00 A"/>
    <property type="chains" value="J/j=2-63"/>
</dbReference>
<dbReference type="PDB" id="3BCC">
    <property type="method" value="X-ray"/>
    <property type="resolution" value="3.70 A"/>
    <property type="chains" value="J=2-63"/>
</dbReference>
<dbReference type="PDB" id="4D6T">
    <property type="method" value="X-ray"/>
    <property type="resolution" value="3.57 A"/>
    <property type="chains" value="J/W=1-64"/>
</dbReference>
<dbReference type="PDB" id="4D6U">
    <property type="method" value="X-ray"/>
    <property type="resolution" value="4.09 A"/>
    <property type="chains" value="J/W=1-64"/>
</dbReference>
<dbReference type="PDB" id="5GPN">
    <property type="method" value="EM"/>
    <property type="resolution" value="5.40 A"/>
    <property type="chains" value="J/L=2-63"/>
</dbReference>
<dbReference type="PDB" id="5KLV">
    <property type="method" value="X-ray"/>
    <property type="resolution" value="2.65 A"/>
    <property type="chains" value="J=2-64"/>
</dbReference>
<dbReference type="PDB" id="5LUF">
    <property type="method" value="EM"/>
    <property type="resolution" value="9.10 A"/>
    <property type="chains" value="j/v=2-63"/>
</dbReference>
<dbReference type="PDB" id="5NMI">
    <property type="method" value="X-ray"/>
    <property type="resolution" value="3.50 A"/>
    <property type="chains" value="J/W=1-64"/>
</dbReference>
<dbReference type="PDB" id="5OKD">
    <property type="method" value="X-ray"/>
    <property type="resolution" value="3.10 A"/>
    <property type="chains" value="J=1-64"/>
</dbReference>
<dbReference type="PDB" id="6FO0">
    <property type="method" value="EM"/>
    <property type="resolution" value="4.10 A"/>
    <property type="chains" value="J/W=1-64"/>
</dbReference>
<dbReference type="PDB" id="6FO2">
    <property type="method" value="EM"/>
    <property type="resolution" value="4.40 A"/>
    <property type="chains" value="J/W=1-64"/>
</dbReference>
<dbReference type="PDB" id="6FO6">
    <property type="method" value="EM"/>
    <property type="resolution" value="4.10 A"/>
    <property type="chains" value="J/W=1-64"/>
</dbReference>
<dbReference type="PDB" id="6HAW">
    <property type="method" value="X-ray"/>
    <property type="resolution" value="3.45 A"/>
    <property type="chains" value="J=3-61"/>
</dbReference>
<dbReference type="PDB" id="6NHG">
    <property type="method" value="X-ray"/>
    <property type="resolution" value="2.80 A"/>
    <property type="chains" value="J=2-64"/>
</dbReference>
<dbReference type="PDB" id="6XVF">
    <property type="method" value="X-ray"/>
    <property type="resolution" value="3.50 A"/>
    <property type="chains" value="J=3-61"/>
</dbReference>
<dbReference type="PDB" id="6ZFS">
    <property type="method" value="X-ray"/>
    <property type="resolution" value="3.50 A"/>
    <property type="chains" value="J=3-61"/>
</dbReference>
<dbReference type="PDB" id="6ZFT">
    <property type="method" value="X-ray"/>
    <property type="resolution" value="3.30 A"/>
    <property type="chains" value="J=3-61"/>
</dbReference>
<dbReference type="PDB" id="6ZFU">
    <property type="method" value="X-ray"/>
    <property type="resolution" value="3.50 A"/>
    <property type="chains" value="J=3-61"/>
</dbReference>
<dbReference type="PDB" id="7DGQ">
    <property type="method" value="EM"/>
    <property type="resolution" value="5.00 A"/>
    <property type="chains" value="B6/u=1-64"/>
</dbReference>
<dbReference type="PDB" id="7DGR">
    <property type="method" value="EM"/>
    <property type="resolution" value="4.60 A"/>
    <property type="chains" value="B2/u=1-64"/>
</dbReference>
<dbReference type="PDB" id="7DGS">
    <property type="method" value="EM"/>
    <property type="resolution" value="7.80 A"/>
    <property type="chains" value="B4/u=1-64"/>
</dbReference>
<dbReference type="PDB" id="7DKF">
    <property type="method" value="EM"/>
    <property type="resolution" value="8.30 A"/>
    <property type="chains" value="J1/V1=1-64"/>
</dbReference>
<dbReference type="PDB" id="7R3V">
    <property type="method" value="X-ray"/>
    <property type="resolution" value="3.20 A"/>
    <property type="chains" value="J=3-61"/>
</dbReference>
<dbReference type="PDB" id="7TAY">
    <property type="method" value="X-ray"/>
    <property type="resolution" value="2.95 A"/>
    <property type="chains" value="J=2-64"/>
</dbReference>
<dbReference type="PDB" id="7TZ6">
    <property type="method" value="EM"/>
    <property type="resolution" value="2.88 A"/>
    <property type="chains" value="J/W=2-64"/>
</dbReference>
<dbReference type="PDB" id="8P65">
    <property type="method" value="EM"/>
    <property type="resolution" value="3.00 A"/>
    <property type="chains" value="J/W=1-64"/>
</dbReference>
<dbReference type="PDB" id="9GCX">
    <property type="method" value="X-ray"/>
    <property type="resolution" value="3.52 A"/>
    <property type="chains" value="J=1-64"/>
</dbReference>
<dbReference type="PDBsum" id="1BCC"/>
<dbReference type="PDBsum" id="1BE3"/>
<dbReference type="PDBsum" id="1BGY"/>
<dbReference type="PDBsum" id="1L0L"/>
<dbReference type="PDBsum" id="1L0N"/>
<dbReference type="PDBsum" id="1NTK"/>
<dbReference type="PDBsum" id="1NTM"/>
<dbReference type="PDBsum" id="1NTZ"/>
<dbReference type="PDBsum" id="1NU1"/>
<dbReference type="PDBsum" id="1PP9"/>
<dbReference type="PDBsum" id="1PPJ"/>
<dbReference type="PDBsum" id="1QCR"/>
<dbReference type="PDBsum" id="1SQB"/>
<dbReference type="PDBsum" id="1SQP"/>
<dbReference type="PDBsum" id="1SQQ"/>
<dbReference type="PDBsum" id="1SQV"/>
<dbReference type="PDBsum" id="1SQX"/>
<dbReference type="PDBsum" id="2A06"/>
<dbReference type="PDBsum" id="2BCC"/>
<dbReference type="PDBsum" id="2FYU"/>
<dbReference type="PDBsum" id="2YBB"/>
<dbReference type="PDBsum" id="3BCC"/>
<dbReference type="PDBsum" id="4D6T"/>
<dbReference type="PDBsum" id="4D6U"/>
<dbReference type="PDBsum" id="5GPN"/>
<dbReference type="PDBsum" id="5KLV"/>
<dbReference type="PDBsum" id="5LUF"/>
<dbReference type="PDBsum" id="5NMI"/>
<dbReference type="PDBsum" id="5OKD"/>
<dbReference type="PDBsum" id="6FO0"/>
<dbReference type="PDBsum" id="6FO2"/>
<dbReference type="PDBsum" id="6FO6"/>
<dbReference type="PDBsum" id="6HAW"/>
<dbReference type="PDBsum" id="6NHG"/>
<dbReference type="PDBsum" id="6XVF"/>
<dbReference type="PDBsum" id="6ZFS"/>
<dbReference type="PDBsum" id="6ZFT"/>
<dbReference type="PDBsum" id="6ZFU"/>
<dbReference type="PDBsum" id="7DGQ"/>
<dbReference type="PDBsum" id="7DGR"/>
<dbReference type="PDBsum" id="7DGS"/>
<dbReference type="PDBsum" id="7DKF"/>
<dbReference type="PDBsum" id="7R3V"/>
<dbReference type="PDBsum" id="7TAY"/>
<dbReference type="PDBsum" id="7TZ6"/>
<dbReference type="PDBsum" id="8P65"/>
<dbReference type="PDBsum" id="9GCX"/>
<dbReference type="EMDB" id="EMD-17461"/>
<dbReference type="EMDB" id="EMD-26203"/>
<dbReference type="EMDB" id="EMD-30673"/>
<dbReference type="EMDB" id="EMD-30674"/>
<dbReference type="EMDB" id="EMD-30675"/>
<dbReference type="EMDB" id="EMD-30706"/>
<dbReference type="EMDB" id="EMD-4107"/>
<dbReference type="EMDB" id="EMD-4286"/>
<dbReference type="EMDB" id="EMD-4288"/>
<dbReference type="EMDB" id="EMD-4292"/>
<dbReference type="EMDB" id="EMD-9534"/>
<dbReference type="SMR" id="P00130"/>
<dbReference type="CORUM" id="P00130"/>
<dbReference type="DIP" id="DIP-38972N"/>
<dbReference type="FunCoup" id="P00130">
    <property type="interactions" value="1858"/>
</dbReference>
<dbReference type="IntAct" id="P00130">
    <property type="interactions" value="3"/>
</dbReference>
<dbReference type="STRING" id="9913.ENSBTAP00000001208"/>
<dbReference type="PaxDb" id="9913-ENSBTAP00000001208"/>
<dbReference type="GeneID" id="616109"/>
<dbReference type="KEGG" id="bta:616109"/>
<dbReference type="CTD" id="29796"/>
<dbReference type="VEuPathDB" id="HostDB:ENSBTAG00000000913"/>
<dbReference type="eggNOG" id="KOG3494">
    <property type="taxonomic scope" value="Eukaryota"/>
</dbReference>
<dbReference type="HOGENOM" id="CLU_171977_2_0_1"/>
<dbReference type="InParanoid" id="P00130"/>
<dbReference type="OMA" id="IKHKYEV"/>
<dbReference type="OrthoDB" id="44067at2759"/>
<dbReference type="TreeFam" id="TF324385"/>
<dbReference type="Reactome" id="R-BTA-611105">
    <property type="pathway name" value="Respiratory electron transport"/>
</dbReference>
<dbReference type="Reactome" id="R-BTA-9865881">
    <property type="pathway name" value="Complex III assembly"/>
</dbReference>
<dbReference type="EvolutionaryTrace" id="P00130"/>
<dbReference type="Proteomes" id="UP000009136">
    <property type="component" value="Chromosome 17"/>
</dbReference>
<dbReference type="Bgee" id="ENSBTAG00000000913">
    <property type="expression patterns" value="Expressed in cardiac ventricle and 106 other cell types or tissues"/>
</dbReference>
<dbReference type="GO" id="GO:0005743">
    <property type="term" value="C:mitochondrial inner membrane"/>
    <property type="evidence" value="ECO:0007669"/>
    <property type="project" value="UniProtKB-SubCell"/>
</dbReference>
<dbReference type="GO" id="GO:0045275">
    <property type="term" value="C:respiratory chain complex III"/>
    <property type="evidence" value="ECO:0000318"/>
    <property type="project" value="GO_Central"/>
</dbReference>
<dbReference type="GO" id="GO:0006122">
    <property type="term" value="P:mitochondrial electron transport, ubiquinol to cytochrome c"/>
    <property type="evidence" value="ECO:0000318"/>
    <property type="project" value="GO_Central"/>
</dbReference>
<dbReference type="FunFam" id="1.20.5.260:FF:000001">
    <property type="entry name" value="Cytochrome b-c1 complex subunit 9"/>
    <property type="match status" value="1"/>
</dbReference>
<dbReference type="Gene3D" id="1.20.5.260">
    <property type="entry name" value="Cytochrome b-c1 complex subunit 9"/>
    <property type="match status" value="1"/>
</dbReference>
<dbReference type="InterPro" id="IPR008027">
    <property type="entry name" value="QCR9"/>
</dbReference>
<dbReference type="InterPro" id="IPR036656">
    <property type="entry name" value="QCR9_sf"/>
</dbReference>
<dbReference type="PANTHER" id="PTHR12980:SF0">
    <property type="entry name" value="CYTOCHROME B-C1 COMPLEX SUBUNIT 9"/>
    <property type="match status" value="1"/>
</dbReference>
<dbReference type="PANTHER" id="PTHR12980">
    <property type="entry name" value="UBIQUINOL-CYTOCHROME C REDUCTASE COMPLEX, SUBUNIT X"/>
    <property type="match status" value="1"/>
</dbReference>
<dbReference type="Pfam" id="PF05365">
    <property type="entry name" value="UCR_UQCRX_QCR9"/>
    <property type="match status" value="1"/>
</dbReference>
<dbReference type="SUPFAM" id="SSF81514">
    <property type="entry name" value="Subunit X (non-heme 7 kDa protein) of cytochrome bc1 complex (Ubiquinol-cytochrome c reductase)"/>
    <property type="match status" value="1"/>
</dbReference>
<gene>
    <name type="primary">UQCR10</name>
</gene>
<proteinExistence type="evidence at protein level"/>
<keyword id="KW-0002">3D-structure</keyword>
<keyword id="KW-0903">Direct protein sequencing</keyword>
<keyword id="KW-0249">Electron transport</keyword>
<keyword id="KW-0472">Membrane</keyword>
<keyword id="KW-0496">Mitochondrion</keyword>
<keyword id="KW-0999">Mitochondrion inner membrane</keyword>
<keyword id="KW-1185">Reference proteome</keyword>
<keyword id="KW-0679">Respiratory chain</keyword>
<keyword id="KW-0812">Transmembrane</keyword>
<keyword id="KW-1133">Transmembrane helix</keyword>
<keyword id="KW-0813">Transport</keyword>
<name>QCR9_BOVIN</name>
<accession>P00130</accession>
<accession>Q3SZT3</accession>